<keyword id="KW-0010">Activator</keyword>
<keyword id="KW-0217">Developmental protein</keyword>
<keyword id="KW-0238">DNA-binding</keyword>
<keyword id="KW-0539">Nucleus</keyword>
<keyword id="KW-1185">Reference proteome</keyword>
<keyword id="KW-0804">Transcription</keyword>
<keyword id="KW-0805">Transcription regulation</keyword>
<reference evidence="6" key="1">
    <citation type="journal article" date="1996" name="Int. J. Dev. Biol.">
        <title>A fork head related multigene family is transcribed in Xenopus laevis embryos.</title>
        <authorList>
            <person name="Lef J."/>
            <person name="Dege P."/>
            <person name="Scheucher M."/>
            <person name="Forsbach-Birk V."/>
            <person name="Clement J.H."/>
            <person name="Knoechel W."/>
        </authorList>
    </citation>
    <scope>NUCLEOTIDE SEQUENCE [MRNA]</scope>
    <source>
        <tissue evidence="5">Gastrula</tissue>
    </source>
</reference>
<reference evidence="6" key="2">
    <citation type="journal article" date="2005" name="Gene">
        <title>Of fox and frogs: fox (fork head/winged helix) transcription factors in Xenopus development.</title>
        <authorList>
            <person name="Pohl B.S."/>
            <person name="Knoechel W."/>
        </authorList>
    </citation>
    <scope>REVIEW</scope>
</reference>
<dbReference type="SMR" id="P84961"/>
<dbReference type="Proteomes" id="UP000186698">
    <property type="component" value="Unplaced"/>
</dbReference>
<dbReference type="GO" id="GO:0005634">
    <property type="term" value="C:nucleus"/>
    <property type="evidence" value="ECO:0000303"/>
    <property type="project" value="UniProtKB"/>
</dbReference>
<dbReference type="GO" id="GO:0003677">
    <property type="term" value="F:DNA binding"/>
    <property type="evidence" value="ECO:0000303"/>
    <property type="project" value="UniProtKB"/>
</dbReference>
<dbReference type="GO" id="GO:0003700">
    <property type="term" value="F:DNA-binding transcription factor activity"/>
    <property type="evidence" value="ECO:0000303"/>
    <property type="project" value="UniProtKB"/>
</dbReference>
<dbReference type="GO" id="GO:0000981">
    <property type="term" value="F:DNA-binding transcription factor activity, RNA polymerase II-specific"/>
    <property type="evidence" value="ECO:0000318"/>
    <property type="project" value="GO_Central"/>
</dbReference>
<dbReference type="GO" id="GO:0019904">
    <property type="term" value="F:protein domain specific binding"/>
    <property type="evidence" value="ECO:0007669"/>
    <property type="project" value="InterPro"/>
</dbReference>
<dbReference type="GO" id="GO:0000978">
    <property type="term" value="F:RNA polymerase II cis-regulatory region sequence-specific DNA binding"/>
    <property type="evidence" value="ECO:0000318"/>
    <property type="project" value="GO_Central"/>
</dbReference>
<dbReference type="GO" id="GO:0043565">
    <property type="term" value="F:sequence-specific DNA binding"/>
    <property type="evidence" value="ECO:0000250"/>
    <property type="project" value="UniProtKB"/>
</dbReference>
<dbReference type="GO" id="GO:0009653">
    <property type="term" value="P:anatomical structure morphogenesis"/>
    <property type="evidence" value="ECO:0000318"/>
    <property type="project" value="GO_Central"/>
</dbReference>
<dbReference type="GO" id="GO:0030154">
    <property type="term" value="P:cell differentiation"/>
    <property type="evidence" value="ECO:0000318"/>
    <property type="project" value="GO_Central"/>
</dbReference>
<dbReference type="GO" id="GO:0001707">
    <property type="term" value="P:mesoderm formation"/>
    <property type="evidence" value="ECO:0000250"/>
    <property type="project" value="UniProtKB"/>
</dbReference>
<dbReference type="GO" id="GO:0045893">
    <property type="term" value="P:positive regulation of DNA-templated transcription"/>
    <property type="evidence" value="ECO:0000250"/>
    <property type="project" value="UniProtKB"/>
</dbReference>
<dbReference type="GO" id="GO:0006355">
    <property type="term" value="P:regulation of DNA-templated transcription"/>
    <property type="evidence" value="ECO:0000303"/>
    <property type="project" value="UniProtKB"/>
</dbReference>
<dbReference type="GO" id="GO:0006357">
    <property type="term" value="P:regulation of transcription by RNA polymerase II"/>
    <property type="evidence" value="ECO:0000318"/>
    <property type="project" value="GO_Central"/>
</dbReference>
<dbReference type="FunFam" id="1.10.10.10:FF:000042">
    <property type="entry name" value="hepatocyte nuclear factor 3-beta"/>
    <property type="match status" value="1"/>
</dbReference>
<dbReference type="Gene3D" id="1.10.10.10">
    <property type="entry name" value="Winged helix-like DNA-binding domain superfamily/Winged helix DNA-binding domain"/>
    <property type="match status" value="1"/>
</dbReference>
<dbReference type="InterPro" id="IPR013638">
    <property type="entry name" value="Fork-head_N"/>
</dbReference>
<dbReference type="InterPro" id="IPR001766">
    <property type="entry name" value="Fork_head_dom"/>
</dbReference>
<dbReference type="InterPro" id="IPR018533">
    <property type="entry name" value="Forkhead_box_C"/>
</dbReference>
<dbReference type="InterPro" id="IPR050211">
    <property type="entry name" value="FOX_domain-containing"/>
</dbReference>
<dbReference type="InterPro" id="IPR018122">
    <property type="entry name" value="TF_fork_head_CS_1"/>
</dbReference>
<dbReference type="InterPro" id="IPR030456">
    <property type="entry name" value="TF_fork_head_CS_2"/>
</dbReference>
<dbReference type="InterPro" id="IPR036388">
    <property type="entry name" value="WH-like_DNA-bd_sf"/>
</dbReference>
<dbReference type="InterPro" id="IPR036390">
    <property type="entry name" value="WH_DNA-bd_sf"/>
</dbReference>
<dbReference type="PANTHER" id="PTHR11829">
    <property type="entry name" value="FORKHEAD BOX PROTEIN"/>
    <property type="match status" value="1"/>
</dbReference>
<dbReference type="PANTHER" id="PTHR11829:SF167">
    <property type="entry name" value="HEPATOCYTE NUCLEAR FACTOR 3-BETA"/>
    <property type="match status" value="1"/>
</dbReference>
<dbReference type="Pfam" id="PF00250">
    <property type="entry name" value="Forkhead"/>
    <property type="match status" value="1"/>
</dbReference>
<dbReference type="Pfam" id="PF08430">
    <property type="entry name" value="Forkhead_N"/>
    <property type="match status" value="1"/>
</dbReference>
<dbReference type="Pfam" id="PF09354">
    <property type="entry name" value="HNF_C"/>
    <property type="match status" value="1"/>
</dbReference>
<dbReference type="PRINTS" id="PR00053">
    <property type="entry name" value="FORKHEAD"/>
</dbReference>
<dbReference type="SMART" id="SM00339">
    <property type="entry name" value="FH"/>
    <property type="match status" value="1"/>
</dbReference>
<dbReference type="SUPFAM" id="SSF46785">
    <property type="entry name" value="Winged helix' DNA-binding domain"/>
    <property type="match status" value="1"/>
</dbReference>
<dbReference type="PROSITE" id="PS00657">
    <property type="entry name" value="FORK_HEAD_1"/>
    <property type="match status" value="1"/>
</dbReference>
<dbReference type="PROSITE" id="PS00658">
    <property type="entry name" value="FORK_HEAD_2"/>
    <property type="match status" value="1"/>
</dbReference>
<dbReference type="PROSITE" id="PS50039">
    <property type="entry name" value="FORK_HEAD_3"/>
    <property type="match status" value="1"/>
</dbReference>
<feature type="chain" id="PRO_0000248857" description="Forkhead box protein A2-B">
    <location>
        <begin position="1"/>
        <end position="433"/>
    </location>
</feature>
<feature type="DNA-binding region" description="Fork-head" evidence="3">
    <location>
        <begin position="147"/>
        <end position="241"/>
    </location>
</feature>
<feature type="region of interest" description="Disordered" evidence="4">
    <location>
        <begin position="247"/>
        <end position="337"/>
    </location>
</feature>
<feature type="region of interest" description="Disordered" evidence="4">
    <location>
        <begin position="407"/>
        <end position="433"/>
    </location>
</feature>
<feature type="compositionally biased region" description="Basic and acidic residues" evidence="4">
    <location>
        <begin position="247"/>
        <end position="260"/>
    </location>
</feature>
<feature type="compositionally biased region" description="Low complexity" evidence="4">
    <location>
        <begin position="261"/>
        <end position="282"/>
    </location>
</feature>
<feature type="compositionally biased region" description="Basic and acidic residues" evidence="4">
    <location>
        <begin position="292"/>
        <end position="302"/>
    </location>
</feature>
<feature type="compositionally biased region" description="Low complexity" evidence="4">
    <location>
        <begin position="315"/>
        <end position="331"/>
    </location>
</feature>
<feature type="compositionally biased region" description="Polar residues" evidence="4">
    <location>
        <begin position="407"/>
        <end position="421"/>
    </location>
</feature>
<organism>
    <name type="scientific">Xenopus laevis</name>
    <name type="common">African clawed frog</name>
    <dbReference type="NCBI Taxonomy" id="8355"/>
    <lineage>
        <taxon>Eukaryota</taxon>
        <taxon>Metazoa</taxon>
        <taxon>Chordata</taxon>
        <taxon>Craniata</taxon>
        <taxon>Vertebrata</taxon>
        <taxon>Euteleostomi</taxon>
        <taxon>Amphibia</taxon>
        <taxon>Batrachia</taxon>
        <taxon>Anura</taxon>
        <taxon>Pipoidea</taxon>
        <taxon>Pipidae</taxon>
        <taxon>Xenopodinae</taxon>
        <taxon>Xenopus</taxon>
        <taxon>Xenopus</taxon>
    </lineage>
</organism>
<gene>
    <name type="primary">foxa2-b</name>
</gene>
<comment type="function">
    <text evidence="1">Acts as a transcriptional activator during early development, limiting the extent of mesoderm formation in the gastrula. Binds to DNA via the target sequence 5'-GT[AC]AACA-3', with 5'-GTAAACA-3' being the preferred binding site (By similarity).</text>
</comment>
<comment type="subcellular location">
    <subcellularLocation>
        <location evidence="2 6">Nucleus</location>
    </subcellularLocation>
</comment>
<name>FXA2B_XENLA</name>
<evidence type="ECO:0000250" key="1"/>
<evidence type="ECO:0000255" key="2"/>
<evidence type="ECO:0000255" key="3">
    <source>
        <dbReference type="PROSITE-ProRule" id="PRU00089"/>
    </source>
</evidence>
<evidence type="ECO:0000256" key="4">
    <source>
        <dbReference type="SAM" id="MobiDB-lite"/>
    </source>
</evidence>
<evidence type="ECO:0000269" key="5">
    <source>
    </source>
</evidence>
<evidence type="ECO:0000305" key="6"/>
<protein>
    <recommendedName>
        <fullName>Forkhead box protein A2-B</fullName>
        <shortName>FoxA2-B</shortName>
        <shortName>FoxA2b</shortName>
    </recommendedName>
    <alternativeName>
        <fullName>Fork head domain-related protein 3'</fullName>
        <shortName>xFD-3'</shortName>
    </alternativeName>
    <alternativeName>
        <fullName>Hepatocyte nuclear factor 3-beta homolog B</fullName>
        <shortName>HNF-3-beta-B</shortName>
        <shortName>HNF3-beta homolog B</shortName>
        <shortName>HNF3-beta-B</shortName>
        <shortName>xHNF3-beta-B</shortName>
    </alternativeName>
</protein>
<proteinExistence type="evidence at transcript level"/>
<accession>P84961</accession>
<sequence>MLGAVKMEGHEDWSSYYGEPEAYSSVGNMNAGLSMNPMNTYMSMSAMSTSANMTASSMNMSYVNTGMSPSITGMSPGTGAMPGMGNGVASMASHLSPSMSPMSAQATSMNALAPYTNINSMSPIYGQSNINRSRDPKTYRRSYTHAKPPYSYISLITMAIQQSPSKMLTLSEVYQWIMDLFPFYRQNQQRWQNSIRHSLSFNDCFLKVPRSPDKPGKGSFWTLHPDSGNMFENGCYLRRQKRFKCDKKPSLREGGGKKLSEGASSVGSVGNSSSERSVGNESPHSSSSPCQEQKRSLVDMKSSHGLSPEHATSPASQAQHLLSQHHSVLSHEAQSHLKPEHHYSFNHPFSINNLMSSEQQHHHHHHHHNHQHHHKMDLKAYEQVMHYSGYGSPMAGSLAMSTVTNKSGLEPSPISSDTSYYQGGYSRPIMNSS</sequence>